<gene>
    <name evidence="8 11" type="primary">nectin1b</name>
</gene>
<proteinExistence type="evidence at transcript level"/>
<dbReference type="EMBL" id="AY881624">
    <property type="protein sequence ID" value="AAX68496.2"/>
    <property type="molecule type" value="mRNA"/>
</dbReference>
<dbReference type="RefSeq" id="NP_001161041.1">
    <property type="nucleotide sequence ID" value="NM_001167569.1"/>
</dbReference>
<dbReference type="SMR" id="B0JYH6"/>
<dbReference type="FunCoup" id="B0JYH6">
    <property type="interactions" value="297"/>
</dbReference>
<dbReference type="GeneID" id="557665"/>
<dbReference type="KEGG" id="dre:557665"/>
<dbReference type="AGR" id="ZFIN:ZDB-GENE-090224-2"/>
<dbReference type="CTD" id="557665"/>
<dbReference type="ZFIN" id="ZDB-GENE-090224-2">
    <property type="gene designation" value="nectin1b"/>
</dbReference>
<dbReference type="OrthoDB" id="8718740at2759"/>
<dbReference type="PhylomeDB" id="B0JYH6"/>
<dbReference type="Reactome" id="R-DRE-198933">
    <property type="pathway name" value="Immunoregulatory interactions between a Lymphoid and a non-Lymphoid cell"/>
</dbReference>
<dbReference type="Reactome" id="R-DRE-418990">
    <property type="pathway name" value="Adherens junctions interactions"/>
</dbReference>
<dbReference type="Reactome" id="R-DRE-420597">
    <property type="pathway name" value="Nectin/Necl trans heterodimerization"/>
</dbReference>
<dbReference type="Proteomes" id="UP000000437">
    <property type="component" value="Chromosome 18"/>
</dbReference>
<dbReference type="GO" id="GO:0005912">
    <property type="term" value="C:adherens junction"/>
    <property type="evidence" value="ECO:0000318"/>
    <property type="project" value="GO_Central"/>
</dbReference>
<dbReference type="GO" id="GO:0005886">
    <property type="term" value="C:plasma membrane"/>
    <property type="evidence" value="ECO:0000250"/>
    <property type="project" value="UniProtKB"/>
</dbReference>
<dbReference type="GO" id="GO:0098631">
    <property type="term" value="F:cell adhesion mediator activity"/>
    <property type="evidence" value="ECO:0000250"/>
    <property type="project" value="UniProtKB"/>
</dbReference>
<dbReference type="GO" id="GO:0007157">
    <property type="term" value="P:heterophilic cell-cell adhesion via plasma membrane cell adhesion molecules"/>
    <property type="evidence" value="ECO:0000250"/>
    <property type="project" value="UniProtKB"/>
</dbReference>
<dbReference type="GO" id="GO:0007156">
    <property type="term" value="P:homophilic cell adhesion via plasma membrane adhesion molecules"/>
    <property type="evidence" value="ECO:0000250"/>
    <property type="project" value="UniProtKB"/>
</dbReference>
<dbReference type="GO" id="GO:1902414">
    <property type="term" value="P:protein localization to cell junction"/>
    <property type="evidence" value="ECO:0000318"/>
    <property type="project" value="GO_Central"/>
</dbReference>
<dbReference type="FunFam" id="2.60.40.10:FF:000268">
    <property type="entry name" value="Nectin cell adhesion molecule 1"/>
    <property type="match status" value="1"/>
</dbReference>
<dbReference type="FunFam" id="2.60.40.10:FF:000304">
    <property type="entry name" value="Nectin cell adhesion molecule 1"/>
    <property type="match status" value="1"/>
</dbReference>
<dbReference type="FunFam" id="2.60.40.10:FF:000427">
    <property type="entry name" value="Nectin cell adhesion molecule 1"/>
    <property type="match status" value="1"/>
</dbReference>
<dbReference type="Gene3D" id="2.60.40.10">
    <property type="entry name" value="Immunoglobulins"/>
    <property type="match status" value="3"/>
</dbReference>
<dbReference type="InterPro" id="IPR013162">
    <property type="entry name" value="CD80_C2-set"/>
</dbReference>
<dbReference type="InterPro" id="IPR007110">
    <property type="entry name" value="Ig-like_dom"/>
</dbReference>
<dbReference type="InterPro" id="IPR036179">
    <property type="entry name" value="Ig-like_dom_sf"/>
</dbReference>
<dbReference type="InterPro" id="IPR013783">
    <property type="entry name" value="Ig-like_fold"/>
</dbReference>
<dbReference type="InterPro" id="IPR003599">
    <property type="entry name" value="Ig_sub"/>
</dbReference>
<dbReference type="InterPro" id="IPR003598">
    <property type="entry name" value="Ig_sub2"/>
</dbReference>
<dbReference type="InterPro" id="IPR013106">
    <property type="entry name" value="Ig_V-set"/>
</dbReference>
<dbReference type="InterPro" id="IPR051427">
    <property type="entry name" value="Nectin/Nectin-like"/>
</dbReference>
<dbReference type="PANTHER" id="PTHR23277:SF69">
    <property type="entry name" value="NECTIN-1"/>
    <property type="match status" value="1"/>
</dbReference>
<dbReference type="PANTHER" id="PTHR23277">
    <property type="entry name" value="NECTIN-RELATED"/>
    <property type="match status" value="1"/>
</dbReference>
<dbReference type="Pfam" id="PF08205">
    <property type="entry name" value="C2-set_2"/>
    <property type="match status" value="1"/>
</dbReference>
<dbReference type="Pfam" id="PF13927">
    <property type="entry name" value="Ig_3"/>
    <property type="match status" value="1"/>
</dbReference>
<dbReference type="Pfam" id="PF07686">
    <property type="entry name" value="V-set"/>
    <property type="match status" value="1"/>
</dbReference>
<dbReference type="SMART" id="SM00409">
    <property type="entry name" value="IG"/>
    <property type="match status" value="2"/>
</dbReference>
<dbReference type="SMART" id="SM00408">
    <property type="entry name" value="IGc2"/>
    <property type="match status" value="2"/>
</dbReference>
<dbReference type="SUPFAM" id="SSF48726">
    <property type="entry name" value="Immunoglobulin"/>
    <property type="match status" value="3"/>
</dbReference>
<dbReference type="PROSITE" id="PS50835">
    <property type="entry name" value="IG_LIKE"/>
    <property type="match status" value="3"/>
</dbReference>
<comment type="function">
    <text evidence="1 7">Cell adhesion molecule that promotes cell-cell contacts and plays important roles in the development of the nervous system (PubMed:36229674). Acts by forming homophilic or heterophilic trans-dimers (By similarity).</text>
</comment>
<comment type="subunit">
    <text evidence="1">Cis- and trans-homodimer. Can form trans-heterodimers.</text>
</comment>
<comment type="subcellular location">
    <subcellularLocation>
        <location evidence="1">Cell membrane</location>
        <topology evidence="2">Single-pass type I membrane protein</topology>
    </subcellularLocation>
    <subcellularLocation>
        <location evidence="1">Cell junction</location>
        <location evidence="1">Adherens junction</location>
    </subcellularLocation>
</comment>
<comment type="tissue specificity">
    <text evidence="6">Expressed in the developing eye and nervous system.</text>
</comment>
<comment type="developmental stage">
    <text evidence="6">Expressed in ganglion cells and inner nuclear neurons (PubMed:19097185). In the retina, expression starts in the inner part and spreads outwards (PubMed:19097185). Not expressed the cornea, the lens and in the region of photoreceptor cell differentiation in the retina (PubMed:19097185).</text>
</comment>
<comment type="disruption phenotype">
    <text evidence="7">Fishes lacking both nectin1a and nectin1b leads to defects in cell adhesion upon serum depletion (PubMed:36229674). The absence of nectin1a and nectin1b also promotes melanoma spreading in melanoma models (PubMed:36229674).</text>
</comment>
<comment type="similarity">
    <text evidence="9">Belongs to the nectin family.</text>
</comment>
<feature type="signal peptide" evidence="2">
    <location>
        <begin position="1"/>
        <end position="21"/>
    </location>
</feature>
<feature type="chain" id="PRO_0000461384" description="Nectin 1b" evidence="2">
    <location>
        <begin position="22"/>
        <end position="541"/>
    </location>
</feature>
<feature type="topological domain" description="Extracellular" evidence="9">
    <location>
        <begin position="22"/>
        <end position="396"/>
    </location>
</feature>
<feature type="transmembrane region" description="Helical" evidence="2">
    <location>
        <begin position="397"/>
        <end position="417"/>
    </location>
</feature>
<feature type="topological domain" description="Cytoplasmic" evidence="9">
    <location>
        <begin position="418"/>
        <end position="541"/>
    </location>
</feature>
<feature type="domain" description="Ig-like V-type" evidence="3">
    <location>
        <begin position="77"/>
        <end position="182"/>
    </location>
</feature>
<feature type="domain" description="Ig-like C2-type 1" evidence="3">
    <location>
        <begin position="187"/>
        <end position="282"/>
    </location>
</feature>
<feature type="domain" description="Ig-like C2-type 2" evidence="3">
    <location>
        <begin position="287"/>
        <end position="374"/>
    </location>
</feature>
<feature type="region of interest" description="Disordered" evidence="5">
    <location>
        <begin position="440"/>
        <end position="507"/>
    </location>
</feature>
<feature type="compositionally biased region" description="Basic and acidic residues" evidence="5">
    <location>
        <begin position="479"/>
        <end position="493"/>
    </location>
</feature>
<feature type="glycosylation site" description="N-linked (GlcNAc...) asparagine" evidence="4">
    <location>
        <position position="51"/>
    </location>
</feature>
<feature type="glycosylation site" description="N-linked (GlcNAc...) asparagine" evidence="4">
    <location>
        <position position="105"/>
    </location>
</feature>
<feature type="glycosylation site" description="N-linked (GlcNAc...) asparagine" evidence="4">
    <location>
        <position position="180"/>
    </location>
</feature>
<feature type="glycosylation site" description="N-linked (GlcNAc...) asparagine" evidence="4">
    <location>
        <position position="242"/>
    </location>
</feature>
<feature type="glycosylation site" description="N-linked (GlcNAc...) asparagine" evidence="4">
    <location>
        <position position="326"/>
    </location>
</feature>
<feature type="glycosylation site" description="N-linked (GlcNAc...) asparagine" evidence="4">
    <location>
        <position position="337"/>
    </location>
</feature>
<feature type="glycosylation site" description="N-linked (GlcNAc...) asparagine" evidence="4">
    <location>
        <position position="372"/>
    </location>
</feature>
<feature type="disulfide bond" evidence="3">
    <location>
        <begin position="84"/>
        <end position="165"/>
    </location>
</feature>
<feature type="disulfide bond" evidence="3">
    <location>
        <begin position="212"/>
        <end position="266"/>
    </location>
</feature>
<feature type="disulfide bond" evidence="3">
    <location>
        <begin position="309"/>
        <end position="356"/>
    </location>
</feature>
<name>NEC1B_DANRE</name>
<reference evidence="10" key="1">
    <citation type="journal article" date="2009" name="Dev. Dyn.">
        <title>Identification and characterization of two zebrafish nectin-1 genes that are differentially expressed in the developing eye and brain.</title>
        <authorList>
            <person name="Helvik J.V."/>
            <person name="Roedahl E."/>
            <person name="Drivenes O."/>
            <person name="Haarr L."/>
        </authorList>
    </citation>
    <scope>NUCLEOTIDE SEQUENCE [MRNA]</scope>
</reference>
<reference key="2">
    <citation type="journal article" date="2022" name="Nat. Genet.">
        <title>Loss of NECTIN1 triggers melanoma dissemination upon local IGF1 depletion.</title>
        <authorList>
            <person name="Ablain J."/>
            <person name="Al Mahi A."/>
            <person name="Rothschild H."/>
            <person name="Prasad M."/>
            <person name="Aires S."/>
            <person name="Yang S."/>
            <person name="Dokukin M.E."/>
            <person name="Xu S."/>
            <person name="Dang M."/>
            <person name="Sokolov I."/>
            <person name="Lian C.G."/>
            <person name="Zon L.I."/>
        </authorList>
    </citation>
    <scope>FUNCTION</scope>
    <scope>DISRUPTION PHENOTYPE</scope>
</reference>
<protein>
    <recommendedName>
        <fullName evidence="8">Nectin 1b</fullName>
    </recommendedName>
</protein>
<accession>B0JYH6</accession>
<evidence type="ECO:0000250" key="1">
    <source>
        <dbReference type="UniProtKB" id="Q15223"/>
    </source>
</evidence>
<evidence type="ECO:0000255" key="2"/>
<evidence type="ECO:0000255" key="3">
    <source>
        <dbReference type="PROSITE-ProRule" id="PRU00114"/>
    </source>
</evidence>
<evidence type="ECO:0000255" key="4">
    <source>
        <dbReference type="PROSITE-ProRule" id="PRU00498"/>
    </source>
</evidence>
<evidence type="ECO:0000256" key="5">
    <source>
        <dbReference type="SAM" id="MobiDB-lite"/>
    </source>
</evidence>
<evidence type="ECO:0000269" key="6">
    <source>
    </source>
</evidence>
<evidence type="ECO:0000269" key="7">
    <source>
    </source>
</evidence>
<evidence type="ECO:0000303" key="8">
    <source>
    </source>
</evidence>
<evidence type="ECO:0000305" key="9"/>
<evidence type="ECO:0000312" key="10">
    <source>
        <dbReference type="EMBL" id="AAX68496.2"/>
    </source>
</evidence>
<evidence type="ECO:0000312" key="11">
    <source>
        <dbReference type="ZFIN" id="ZDB-GENE-090224-2"/>
    </source>
</evidence>
<sequence length="541" mass="60113">MDKQESFFVGHKSHRCSQNRSVSQIHQRTSRLSECYTVPLQWPHGIVWHNNNSLLKGLEAGNGQSVQTDPSKSGFVGDTVELKCLFINGKPPVKISQVTWQKLINGTKQNVAIANPALGVSVLTPFKDRVSFKHPAVRQRTPSSLEDTTIVFSSLRLSDEAAYICEYTTFPAGNRENMVNLTVFARPVTKMTLTSPTIVARTPKRKMPVATCMSANGKPPSVIKWDTTLKGEATFQETRNPNGTVTVRSNYIVLPSRETHRQKLTCIVTYRSERFTDSVILNVQYEPEVKIEGFDGNWYLNRPNVQLTCNADANPPVTVYQWKLLNGSLPNNIEIKNNTLFFKGPVTYELGGTYVCEATNSIGTRSGLVEVNVTELPNIPFDEREIPAELHSSGAAIGGAVGGVALLVAAIALLVFFLRRRQRTFKGDYSTKKHVFGNGYSKAGGMPAHPPMPKNLQYPDDSDDEKKPAQISGPGGFESGDRDFDGNSEDLKRPYFTVDEGESRDYDERTLAFQYDPEPEIADDMVSQTDGSVISKKEWYV</sequence>
<keyword id="KW-0130">Cell adhesion</keyword>
<keyword id="KW-0965">Cell junction</keyword>
<keyword id="KW-1003">Cell membrane</keyword>
<keyword id="KW-1015">Disulfide bond</keyword>
<keyword id="KW-0325">Glycoprotein</keyword>
<keyword id="KW-0472">Membrane</keyword>
<keyword id="KW-1185">Reference proteome</keyword>
<keyword id="KW-0677">Repeat</keyword>
<keyword id="KW-0732">Signal</keyword>
<keyword id="KW-0812">Transmembrane</keyword>
<keyword id="KW-1133">Transmembrane helix</keyword>
<organism>
    <name type="scientific">Danio rerio</name>
    <name type="common">Zebrafish</name>
    <name type="synonym">Brachydanio rerio</name>
    <dbReference type="NCBI Taxonomy" id="7955"/>
    <lineage>
        <taxon>Eukaryota</taxon>
        <taxon>Metazoa</taxon>
        <taxon>Chordata</taxon>
        <taxon>Craniata</taxon>
        <taxon>Vertebrata</taxon>
        <taxon>Euteleostomi</taxon>
        <taxon>Actinopterygii</taxon>
        <taxon>Neopterygii</taxon>
        <taxon>Teleostei</taxon>
        <taxon>Ostariophysi</taxon>
        <taxon>Cypriniformes</taxon>
        <taxon>Danionidae</taxon>
        <taxon>Danioninae</taxon>
        <taxon>Danio</taxon>
    </lineage>
</organism>